<dbReference type="EMBL" id="AE017143">
    <property type="protein sequence ID" value="AAP95159.1"/>
    <property type="molecule type" value="Genomic_DNA"/>
</dbReference>
<dbReference type="RefSeq" id="WP_010944213.1">
    <property type="nucleotide sequence ID" value="NC_002940.2"/>
</dbReference>
<dbReference type="SMR" id="P59885"/>
<dbReference type="STRING" id="233412.HD_0166"/>
<dbReference type="KEGG" id="hdu:HD_0166"/>
<dbReference type="eggNOG" id="COG0684">
    <property type="taxonomic scope" value="Bacteria"/>
</dbReference>
<dbReference type="HOGENOM" id="CLU_072626_4_0_6"/>
<dbReference type="OrthoDB" id="943692at2"/>
<dbReference type="Proteomes" id="UP000001022">
    <property type="component" value="Chromosome"/>
</dbReference>
<dbReference type="GO" id="GO:0005737">
    <property type="term" value="C:cytoplasm"/>
    <property type="evidence" value="ECO:0007669"/>
    <property type="project" value="UniProtKB-SubCell"/>
</dbReference>
<dbReference type="GO" id="GO:0060698">
    <property type="term" value="F:endoribonuclease inhibitor activity"/>
    <property type="evidence" value="ECO:0007669"/>
    <property type="project" value="UniProtKB-UniRule"/>
</dbReference>
<dbReference type="GO" id="GO:0019899">
    <property type="term" value="F:enzyme binding"/>
    <property type="evidence" value="ECO:0007669"/>
    <property type="project" value="UniProtKB-UniRule"/>
</dbReference>
<dbReference type="GO" id="GO:0051252">
    <property type="term" value="P:regulation of RNA metabolic process"/>
    <property type="evidence" value="ECO:0007669"/>
    <property type="project" value="InterPro"/>
</dbReference>
<dbReference type="CDD" id="cd16841">
    <property type="entry name" value="RraA_family"/>
    <property type="match status" value="1"/>
</dbReference>
<dbReference type="Gene3D" id="3.50.30.40">
    <property type="entry name" value="Ribonuclease E inhibitor RraA/RraA-like"/>
    <property type="match status" value="1"/>
</dbReference>
<dbReference type="HAMAP" id="MF_00471">
    <property type="entry name" value="RraA"/>
    <property type="match status" value="1"/>
</dbReference>
<dbReference type="InterPro" id="IPR010203">
    <property type="entry name" value="RraA"/>
</dbReference>
<dbReference type="InterPro" id="IPR005493">
    <property type="entry name" value="RraA/RraA-like"/>
</dbReference>
<dbReference type="InterPro" id="IPR036704">
    <property type="entry name" value="RraA/RraA-like_sf"/>
</dbReference>
<dbReference type="InterPro" id="IPR014339">
    <property type="entry name" value="RraA_gpbac"/>
</dbReference>
<dbReference type="NCBIfam" id="TIGR01935">
    <property type="entry name" value="NOT-MenG"/>
    <property type="match status" value="1"/>
</dbReference>
<dbReference type="NCBIfam" id="NF006875">
    <property type="entry name" value="PRK09372.1"/>
    <property type="match status" value="1"/>
</dbReference>
<dbReference type="NCBIfam" id="TIGR02998">
    <property type="entry name" value="RraA_entero"/>
    <property type="match status" value="1"/>
</dbReference>
<dbReference type="PANTHER" id="PTHR33254">
    <property type="entry name" value="4-HYDROXY-4-METHYL-2-OXOGLUTARATE ALDOLASE 3-RELATED"/>
    <property type="match status" value="1"/>
</dbReference>
<dbReference type="PANTHER" id="PTHR33254:SF29">
    <property type="entry name" value="REGULATOR OF RIBONUCLEASE ACTIVITY A"/>
    <property type="match status" value="1"/>
</dbReference>
<dbReference type="Pfam" id="PF03737">
    <property type="entry name" value="RraA-like"/>
    <property type="match status" value="1"/>
</dbReference>
<dbReference type="SUPFAM" id="SSF89562">
    <property type="entry name" value="RraA-like"/>
    <property type="match status" value="1"/>
</dbReference>
<evidence type="ECO:0000255" key="1">
    <source>
        <dbReference type="HAMAP-Rule" id="MF_00471"/>
    </source>
</evidence>
<protein>
    <recommendedName>
        <fullName evidence="1">Regulator of ribonuclease activity A</fullName>
    </recommendedName>
</protein>
<sequence length="165" mass="17622">MRIDTSALCDIYSDQVDVVEPIFSSFGGASSFYGKITTVKCFENNGLIAEVLEEEGEGRVLLIDGGGAVRRALIDAELAKLAVDNGWQGIIVYGAVRQLDVLETLDIGIHALAPIPVGAEDADIGEVDTPVNFGGVTFFPEDYVYADLTGIILSPELLDLNELAE</sequence>
<name>RRAA_HAEDU</name>
<gene>
    <name evidence="1" type="primary">rraA</name>
    <name type="ordered locus">HD_0166</name>
</gene>
<accession>P59885</accession>
<keyword id="KW-0963">Cytoplasm</keyword>
<keyword id="KW-1185">Reference proteome</keyword>
<organism>
    <name type="scientific">Haemophilus ducreyi (strain 35000HP / ATCC 700724)</name>
    <dbReference type="NCBI Taxonomy" id="233412"/>
    <lineage>
        <taxon>Bacteria</taxon>
        <taxon>Pseudomonadati</taxon>
        <taxon>Pseudomonadota</taxon>
        <taxon>Gammaproteobacteria</taxon>
        <taxon>Pasteurellales</taxon>
        <taxon>Pasteurellaceae</taxon>
        <taxon>Haemophilus</taxon>
    </lineage>
</organism>
<reference key="1">
    <citation type="submission" date="2003-06" db="EMBL/GenBank/DDBJ databases">
        <title>The complete genome sequence of Haemophilus ducreyi.</title>
        <authorList>
            <person name="Munson R.S. Jr."/>
            <person name="Ray W.C."/>
            <person name="Mahairas G."/>
            <person name="Sabo P."/>
            <person name="Mungur R."/>
            <person name="Johnson L."/>
            <person name="Nguyen D."/>
            <person name="Wang J."/>
            <person name="Forst C."/>
            <person name="Hood L."/>
        </authorList>
    </citation>
    <scope>NUCLEOTIDE SEQUENCE [LARGE SCALE GENOMIC DNA]</scope>
    <source>
        <strain>35000HP / ATCC 700724</strain>
    </source>
</reference>
<proteinExistence type="inferred from homology"/>
<comment type="function">
    <text evidence="1">Globally modulates RNA abundance by binding to RNase E (Rne) and regulating its endonucleolytic activity. Can modulate Rne action in a substrate-dependent manner by altering the composition of the degradosome. Modulates RNA-binding and helicase activities of the degradosome.</text>
</comment>
<comment type="subunit">
    <text evidence="1">Homotrimer. Binds to both RNA-binding sites in the C-terminal region of Rne and to RhlB.</text>
</comment>
<comment type="subcellular location">
    <subcellularLocation>
        <location evidence="1">Cytoplasm</location>
    </subcellularLocation>
</comment>
<comment type="similarity">
    <text evidence="1">Belongs to the RraA family.</text>
</comment>
<feature type="chain" id="PRO_0000209615" description="Regulator of ribonuclease activity A">
    <location>
        <begin position="1"/>
        <end position="165"/>
    </location>
</feature>